<proteinExistence type="evidence at protein level"/>
<gene>
    <name type="ordered locus">Rv1289</name>
    <name type="ORF">MTCY373.08</name>
</gene>
<sequence length="210" mass="23550">MCVSVGESVAQSLQQWDRKLWDVAMLHACNAVDETGRKRYPTLGVGTRFRTALRDSLDIYGVMATPGVDLEKTRFPVGVRSDLLPDKRPDIADVLYGIHRWLHGHADESSVEFEVSPYVNASAALRIANDGKIQLPKSAILGLLAVAVFAPENKGEVIPPDYQLSWYDHVFFISVWWGWQDHFREIVNVDRASLVALDFGDLWNGWTPVG</sequence>
<organism>
    <name type="scientific">Mycobacterium tuberculosis (strain ATCC 25618 / H37Rv)</name>
    <dbReference type="NCBI Taxonomy" id="83332"/>
    <lineage>
        <taxon>Bacteria</taxon>
        <taxon>Bacillati</taxon>
        <taxon>Actinomycetota</taxon>
        <taxon>Actinomycetes</taxon>
        <taxon>Mycobacteriales</taxon>
        <taxon>Mycobacteriaceae</taxon>
        <taxon>Mycobacterium</taxon>
        <taxon>Mycobacterium tuberculosis complex</taxon>
    </lineage>
</organism>
<reference key="1">
    <citation type="journal article" date="1998" name="Nature">
        <title>Deciphering the biology of Mycobacterium tuberculosis from the complete genome sequence.</title>
        <authorList>
            <person name="Cole S.T."/>
            <person name="Brosch R."/>
            <person name="Parkhill J."/>
            <person name="Garnier T."/>
            <person name="Churcher C.M."/>
            <person name="Harris D.E."/>
            <person name="Gordon S.V."/>
            <person name="Eiglmeier K."/>
            <person name="Gas S."/>
            <person name="Barry C.E. III"/>
            <person name="Tekaia F."/>
            <person name="Badcock K."/>
            <person name="Basham D."/>
            <person name="Brown D."/>
            <person name="Chillingworth T."/>
            <person name="Connor R."/>
            <person name="Davies R.M."/>
            <person name="Devlin K."/>
            <person name="Feltwell T."/>
            <person name="Gentles S."/>
            <person name="Hamlin N."/>
            <person name="Holroyd S."/>
            <person name="Hornsby T."/>
            <person name="Jagels K."/>
            <person name="Krogh A."/>
            <person name="McLean J."/>
            <person name="Moule S."/>
            <person name="Murphy L.D."/>
            <person name="Oliver S."/>
            <person name="Osborne J."/>
            <person name="Quail M.A."/>
            <person name="Rajandream M.A."/>
            <person name="Rogers J."/>
            <person name="Rutter S."/>
            <person name="Seeger K."/>
            <person name="Skelton S."/>
            <person name="Squares S."/>
            <person name="Squares R."/>
            <person name="Sulston J.E."/>
            <person name="Taylor K."/>
            <person name="Whitehead S."/>
            <person name="Barrell B.G."/>
        </authorList>
    </citation>
    <scope>NUCLEOTIDE SEQUENCE [LARGE SCALE GENOMIC DNA]</scope>
    <source>
        <strain>ATCC 25618 / H37Rv</strain>
    </source>
</reference>
<reference key="2">
    <citation type="journal article" date="2011" name="Mol. Cell. Proteomics">
        <title>Proteogenomic analysis of Mycobacterium tuberculosis by high resolution mass spectrometry.</title>
        <authorList>
            <person name="Kelkar D.S."/>
            <person name="Kumar D."/>
            <person name="Kumar P."/>
            <person name="Balakrishnan L."/>
            <person name="Muthusamy B."/>
            <person name="Yadav A.K."/>
            <person name="Shrivastava P."/>
            <person name="Marimuthu A."/>
            <person name="Anand S."/>
            <person name="Sundaram H."/>
            <person name="Kingsbury R."/>
            <person name="Harsha H.C."/>
            <person name="Nair B."/>
            <person name="Prasad T.S."/>
            <person name="Chauhan D.S."/>
            <person name="Katoch K."/>
            <person name="Katoch V.M."/>
            <person name="Kumar P."/>
            <person name="Chaerkady R."/>
            <person name="Ramachandran S."/>
            <person name="Dash D."/>
            <person name="Pandey A."/>
        </authorList>
    </citation>
    <scope>IDENTIFICATION BY MASS SPECTROMETRY [LARGE SCALE ANALYSIS]</scope>
    <source>
        <strain>ATCC 25618 / H37Rv</strain>
    </source>
</reference>
<dbReference type="EMBL" id="AL123456">
    <property type="protein sequence ID" value="CCP44045.1"/>
    <property type="molecule type" value="Genomic_DNA"/>
</dbReference>
<dbReference type="PIR" id="E70772">
    <property type="entry name" value="E70772"/>
</dbReference>
<dbReference type="RefSeq" id="NP_215805.1">
    <property type="nucleotide sequence ID" value="NC_000962.3"/>
</dbReference>
<dbReference type="RefSeq" id="WP_003406626.1">
    <property type="nucleotide sequence ID" value="NZ_NVQJ01000030.1"/>
</dbReference>
<dbReference type="STRING" id="83332.Rv1289"/>
<dbReference type="PaxDb" id="83332-Rv1289"/>
<dbReference type="DNASU" id="886994"/>
<dbReference type="GeneID" id="886994"/>
<dbReference type="KEGG" id="mtu:Rv1289"/>
<dbReference type="KEGG" id="mtv:RVBD_1289"/>
<dbReference type="TubercuList" id="Rv1289"/>
<dbReference type="eggNOG" id="ENOG5033GPJ">
    <property type="taxonomic scope" value="Bacteria"/>
</dbReference>
<dbReference type="InParanoid" id="P9WM37"/>
<dbReference type="OrthoDB" id="4539886at2"/>
<dbReference type="Proteomes" id="UP000001584">
    <property type="component" value="Chromosome"/>
</dbReference>
<dbReference type="GO" id="GO:0009274">
    <property type="term" value="C:peptidoglycan-based cell wall"/>
    <property type="evidence" value="ECO:0007005"/>
    <property type="project" value="MTBBASE"/>
</dbReference>
<protein>
    <recommendedName>
        <fullName>Uncharacterized protein Rv1289</fullName>
    </recommendedName>
</protein>
<feature type="chain" id="PRO_0000103787" description="Uncharacterized protein Rv1289">
    <location>
        <begin position="1"/>
        <end position="210"/>
    </location>
</feature>
<name>Y1289_MYCTU</name>
<accession>P9WM37</accession>
<accession>L0T7U4</accession>
<accession>P64799</accession>
<accession>Q10615</accession>
<keyword id="KW-1185">Reference proteome</keyword>